<name>ACYP_SYNS3</name>
<keyword id="KW-0378">Hydrolase</keyword>
<keyword id="KW-1185">Reference proteome</keyword>
<gene>
    <name type="primary">acyP</name>
    <name type="ordered locus">sync_0999</name>
</gene>
<reference key="1">
    <citation type="journal article" date="2006" name="Proc. Natl. Acad. Sci. U.S.A.">
        <title>Genome sequence of Synechococcus CC9311: insights into adaptation to a coastal environment.</title>
        <authorList>
            <person name="Palenik B."/>
            <person name="Ren Q."/>
            <person name="Dupont C.L."/>
            <person name="Myers G.S."/>
            <person name="Heidelberg J.F."/>
            <person name="Badger J.H."/>
            <person name="Madupu R."/>
            <person name="Nelson W.C."/>
            <person name="Brinkac L.M."/>
            <person name="Dodson R.J."/>
            <person name="Durkin A.S."/>
            <person name="Daugherty S.C."/>
            <person name="Sullivan S.A."/>
            <person name="Khouri H."/>
            <person name="Mohamoud Y."/>
            <person name="Halpin R."/>
            <person name="Paulsen I.T."/>
        </authorList>
    </citation>
    <scope>NUCLEOTIDE SEQUENCE [LARGE SCALE GENOMIC DNA]</scope>
    <source>
        <strain>CC9311</strain>
    </source>
</reference>
<sequence>MKERWRFLIEGSVQGVGFRNSCRRRALDLGLCGWVRNLKDGVVEIQAEGDELALNELRLWCERGPSAATVKRVLLSKIPVTGNDWFDVRT</sequence>
<protein>
    <recommendedName>
        <fullName>Acylphosphatase</fullName>
        <ecNumber>3.6.1.7</ecNumber>
    </recommendedName>
    <alternativeName>
        <fullName>Acylphosphate phosphohydrolase</fullName>
    </alternativeName>
</protein>
<proteinExistence type="inferred from homology"/>
<dbReference type="EC" id="3.6.1.7"/>
<dbReference type="EMBL" id="CP000435">
    <property type="protein sequence ID" value="ABI46729.1"/>
    <property type="molecule type" value="Genomic_DNA"/>
</dbReference>
<dbReference type="SMR" id="Q0IBG0"/>
<dbReference type="STRING" id="64471.sync_0999"/>
<dbReference type="KEGG" id="syg:sync_0999"/>
<dbReference type="eggNOG" id="COG1254">
    <property type="taxonomic scope" value="Bacteria"/>
</dbReference>
<dbReference type="HOGENOM" id="CLU_141932_1_0_3"/>
<dbReference type="Proteomes" id="UP000001961">
    <property type="component" value="Chromosome"/>
</dbReference>
<dbReference type="GO" id="GO:0003998">
    <property type="term" value="F:acylphosphatase activity"/>
    <property type="evidence" value="ECO:0007669"/>
    <property type="project" value="UniProtKB-EC"/>
</dbReference>
<dbReference type="Gene3D" id="3.30.70.100">
    <property type="match status" value="1"/>
</dbReference>
<dbReference type="InterPro" id="IPR020456">
    <property type="entry name" value="Acylphosphatase"/>
</dbReference>
<dbReference type="InterPro" id="IPR001792">
    <property type="entry name" value="Acylphosphatase-like_dom"/>
</dbReference>
<dbReference type="InterPro" id="IPR036046">
    <property type="entry name" value="Acylphosphatase-like_dom_sf"/>
</dbReference>
<dbReference type="InterPro" id="IPR017968">
    <property type="entry name" value="Acylphosphatase_CS"/>
</dbReference>
<dbReference type="NCBIfam" id="NF011023">
    <property type="entry name" value="PRK14452.1"/>
    <property type="match status" value="1"/>
</dbReference>
<dbReference type="PANTHER" id="PTHR47268">
    <property type="entry name" value="ACYLPHOSPHATASE"/>
    <property type="match status" value="1"/>
</dbReference>
<dbReference type="PANTHER" id="PTHR47268:SF4">
    <property type="entry name" value="ACYLPHOSPHATASE"/>
    <property type="match status" value="1"/>
</dbReference>
<dbReference type="Pfam" id="PF00708">
    <property type="entry name" value="Acylphosphatase"/>
    <property type="match status" value="1"/>
</dbReference>
<dbReference type="PRINTS" id="PR00112">
    <property type="entry name" value="ACYLPHPHTASE"/>
</dbReference>
<dbReference type="SUPFAM" id="SSF54975">
    <property type="entry name" value="Acylphosphatase/BLUF domain-like"/>
    <property type="match status" value="1"/>
</dbReference>
<dbReference type="PROSITE" id="PS00150">
    <property type="entry name" value="ACYLPHOSPHATASE_1"/>
    <property type="match status" value="1"/>
</dbReference>
<dbReference type="PROSITE" id="PS00151">
    <property type="entry name" value="ACYLPHOSPHATASE_2"/>
    <property type="match status" value="1"/>
</dbReference>
<dbReference type="PROSITE" id="PS51160">
    <property type="entry name" value="ACYLPHOSPHATASE_3"/>
    <property type="match status" value="1"/>
</dbReference>
<accession>Q0IBG0</accession>
<feature type="chain" id="PRO_0000326822" description="Acylphosphatase">
    <location>
        <begin position="1"/>
        <end position="90"/>
    </location>
</feature>
<feature type="domain" description="Acylphosphatase-like" evidence="1">
    <location>
        <begin position="4"/>
        <end position="90"/>
    </location>
</feature>
<feature type="active site" evidence="1">
    <location>
        <position position="19"/>
    </location>
</feature>
<feature type="active site" evidence="1">
    <location>
        <position position="37"/>
    </location>
</feature>
<evidence type="ECO:0000255" key="1">
    <source>
        <dbReference type="PROSITE-ProRule" id="PRU00520"/>
    </source>
</evidence>
<evidence type="ECO:0000305" key="2"/>
<organism>
    <name type="scientific">Synechococcus sp. (strain CC9311)</name>
    <dbReference type="NCBI Taxonomy" id="64471"/>
    <lineage>
        <taxon>Bacteria</taxon>
        <taxon>Bacillati</taxon>
        <taxon>Cyanobacteriota</taxon>
        <taxon>Cyanophyceae</taxon>
        <taxon>Synechococcales</taxon>
        <taxon>Synechococcaceae</taxon>
        <taxon>Synechococcus</taxon>
    </lineage>
</organism>
<comment type="catalytic activity">
    <reaction>
        <text>an acyl phosphate + H2O = a carboxylate + phosphate + H(+)</text>
        <dbReference type="Rhea" id="RHEA:14965"/>
        <dbReference type="ChEBI" id="CHEBI:15377"/>
        <dbReference type="ChEBI" id="CHEBI:15378"/>
        <dbReference type="ChEBI" id="CHEBI:29067"/>
        <dbReference type="ChEBI" id="CHEBI:43474"/>
        <dbReference type="ChEBI" id="CHEBI:59918"/>
        <dbReference type="EC" id="3.6.1.7"/>
    </reaction>
</comment>
<comment type="similarity">
    <text evidence="2">Belongs to the acylphosphatase family.</text>
</comment>